<organism>
    <name type="scientific">Influenza A virus (strain A/Turkey/Wisconsin/1/1966 H9N2)</name>
    <dbReference type="NCBI Taxonomy" id="385620"/>
    <lineage>
        <taxon>Viruses</taxon>
        <taxon>Riboviria</taxon>
        <taxon>Orthornavirae</taxon>
        <taxon>Negarnaviricota</taxon>
        <taxon>Polyploviricotina</taxon>
        <taxon>Insthoviricetes</taxon>
        <taxon>Articulavirales</taxon>
        <taxon>Orthomyxoviridae</taxon>
        <taxon>Alphainfluenzavirus</taxon>
        <taxon>Alphainfluenzavirus influenzae</taxon>
        <taxon>Influenza A virus</taxon>
    </lineage>
</organism>
<proteinExistence type="inferred from homology"/>
<dbReference type="EMBL" id="DQ067442">
    <property type="status" value="NOT_ANNOTATED_CDS"/>
    <property type="molecule type" value="Genomic_RNA"/>
</dbReference>
<dbReference type="EMBL" id="CY014668">
    <property type="status" value="NOT_ANNOTATED_CDS"/>
    <property type="molecule type" value="Genomic_RNA"/>
</dbReference>
<dbReference type="SMR" id="P0DJV9"/>
<dbReference type="Proteomes" id="UP000115522">
    <property type="component" value="Genome"/>
</dbReference>
<dbReference type="GO" id="GO:0003723">
    <property type="term" value="F:RNA binding"/>
    <property type="evidence" value="ECO:0007669"/>
    <property type="project" value="InterPro"/>
</dbReference>
<dbReference type="GO" id="GO:0039694">
    <property type="term" value="P:viral RNA genome replication"/>
    <property type="evidence" value="ECO:0007669"/>
    <property type="project" value="InterPro"/>
</dbReference>
<dbReference type="GO" id="GO:0075523">
    <property type="term" value="P:viral translational frameshifting"/>
    <property type="evidence" value="ECO:0007669"/>
    <property type="project" value="UniProtKB-KW"/>
</dbReference>
<dbReference type="FunFam" id="3.40.91.90:FF:000001">
    <property type="entry name" value="Polymerase acidic protein"/>
    <property type="match status" value="1"/>
</dbReference>
<dbReference type="Gene3D" id="3.40.91.90">
    <property type="entry name" value="Influenza RNA-dependent RNA polymerase subunit PA, endonuclease domain"/>
    <property type="match status" value="1"/>
</dbReference>
<dbReference type="InterPro" id="IPR001009">
    <property type="entry name" value="PA/PA-X"/>
</dbReference>
<dbReference type="InterPro" id="IPR038372">
    <property type="entry name" value="PA/PA-X_sf"/>
</dbReference>
<dbReference type="Pfam" id="PF00603">
    <property type="entry name" value="Flu_PA"/>
    <property type="match status" value="1"/>
</dbReference>
<keyword id="KW-1132">Decay of host mRNAs by virus</keyword>
<keyword id="KW-1262">Eukaryotic host gene expression shutoff by virus</keyword>
<keyword id="KW-1035">Host cytoplasm</keyword>
<keyword id="KW-1190">Host gene expression shutoff by virus</keyword>
<keyword id="KW-1192">Host mRNA suppression by virus</keyword>
<keyword id="KW-1048">Host nucleus</keyword>
<keyword id="KW-0945">Host-virus interaction</keyword>
<keyword id="KW-0688">Ribosomal frameshifting</keyword>
<gene>
    <name type="primary">PA</name>
</gene>
<accession>P0DJV9</accession>
<protein>
    <recommendedName>
        <fullName>Protein PA-X</fullName>
    </recommendedName>
</protein>
<evidence type="ECO:0000250" key="1">
    <source>
        <dbReference type="UniProtKB" id="P0CK64"/>
    </source>
</evidence>
<evidence type="ECO:0000250" key="2">
    <source>
        <dbReference type="UniProtKB" id="P0CK68"/>
    </source>
</evidence>
<evidence type="ECO:0000250" key="3">
    <source>
        <dbReference type="UniProtKB" id="P0DJW8"/>
    </source>
</evidence>
<evidence type="ECO:0000250" key="4">
    <source>
        <dbReference type="UniProtKB" id="P0DXO5"/>
    </source>
</evidence>
<evidence type="ECO:0000305" key="5"/>
<organismHost>
    <name type="scientific">Aves</name>
    <dbReference type="NCBI Taxonomy" id="8782"/>
</organismHost>
<comment type="function">
    <text evidence="1 4">Plays a major role in the shutoff of the host protein expression by cleaving mRNAs probably via an endonuclease activity. This host shutoff allows the virus to escape from the host antiviral response (By similarity). Hijacks host RNA splicing machinery to selectively target host RNAs containing introns for destruction. This may explain the preferential degradation of RNAs that have undergone co- or post-transcriptional processing (By similarity).</text>
</comment>
<comment type="subcellular location">
    <subcellularLocation>
        <location evidence="4">Host cytoplasm</location>
    </subcellularLocation>
    <subcellularLocation>
        <location evidence="4">Host nucleus</location>
    </subcellularLocation>
</comment>
<comment type="alternative products">
    <event type="ribosomal frameshifting"/>
    <isoform>
        <id>P0DJV9-1</id>
        <name>PA-X</name>
        <sequence type="displayed"/>
    </isoform>
    <isoform>
        <id>Q0A452-1</id>
        <name>PA</name>
        <sequence type="external"/>
    </isoform>
</comment>
<comment type="domain">
    <text evidence="1 4">The probable endonuclease active site in the N-terminus and the basic amino acid cluster in the C-terminus are important for the shutoff activity. The C-terminus acts as a nuclear localization signal (By similarity). The C-terminus is recruited to host protein complexes involved in nuclear Pol II RNA processing (By similarity).</text>
</comment>
<comment type="similarity">
    <text evidence="5">Belongs to the influenza viruses PA-X family.</text>
</comment>
<reference key="1">
    <citation type="journal article" date="2005" name="Virology">
        <title>Evolution of H9N2 influenza viruses from domestic poultry in Mainland China.</title>
        <authorList>
            <person name="Li C."/>
            <person name="Yu K."/>
            <person name="Tian G."/>
            <person name="Yu D."/>
            <person name="Liu L."/>
            <person name="Jing B."/>
            <person name="Ping J."/>
            <person name="Chen H."/>
        </authorList>
    </citation>
    <scope>NUCLEOTIDE SEQUENCE [GENOMIC RNA]</scope>
</reference>
<reference key="2">
    <citation type="journal article" date="2006" name="Science">
        <title>Large-scale sequence analysis of avian influenza isolates.</title>
        <authorList>
            <person name="Obenauer J.C."/>
            <person name="Denson J."/>
            <person name="Mehta P.K."/>
            <person name="Su X."/>
            <person name="Mukatira S."/>
            <person name="Finkelstein D.B."/>
            <person name="Xu X."/>
            <person name="Wang J."/>
            <person name="Ma J."/>
            <person name="Fan Y."/>
            <person name="Rakestraw K.M."/>
            <person name="Webster R.G."/>
            <person name="Hoffmann E."/>
            <person name="Krauss S."/>
            <person name="Zheng J."/>
            <person name="Zhang Z."/>
            <person name="Naeve C.W."/>
        </authorList>
    </citation>
    <scope>NUCLEOTIDE SEQUENCE [GENOMIC RNA]</scope>
</reference>
<sequence length="252" mass="29347">MEDFVRQCFNPMIVELAEKAMKEYGEDPKIETNKFAAICTHLEVCFMYSDFHFIDERGESIIVESGDPNALLKHRFEIIEGRDRTMAWTVVNSICNTTGVEKPKFLPDLYDYKENRFIEIGVTRREVHIYYLEKANKVKSEKTHIHIFSFTGEEMATKADYTLDEESRARIKTRLFTIRQEMASRGLWDSFVSPREAKRQLKKDLKSQEQCAGLPTKVSHRTSPALKTLEPMWMDSNRTAALRASFLKCPKK</sequence>
<name>PAX_I66A1</name>
<feature type="chain" id="PRO_0000419422" description="Protein PA-X">
    <location>
        <begin position="1"/>
        <end position="252"/>
    </location>
</feature>
<feature type="active site" evidence="2">
    <location>
        <position position="80"/>
    </location>
</feature>
<feature type="active site" evidence="2">
    <location>
        <position position="108"/>
    </location>
</feature>
<feature type="site" description="Important for efficient shutoff activity and nuclear localization" evidence="4">
    <location>
        <position position="195"/>
    </location>
</feature>
<feature type="site" description="Important for efficient shutoff activity and nuclear localization" evidence="4">
    <location>
        <position position="198"/>
    </location>
</feature>
<feature type="site" description="Important for efficient shutoff activity and nuclear localization" evidence="4">
    <location>
        <position position="199"/>
    </location>
</feature>
<feature type="site" description="Important for efficient shutoff activity" evidence="3">
    <location>
        <position position="202"/>
    </location>
</feature>
<feature type="site" description="Important for efficient shutoff activity" evidence="3">
    <location>
        <position position="203"/>
    </location>
</feature>
<feature type="site" description="Important for efficient shutoff activity" evidence="3">
    <location>
        <position position="206"/>
    </location>
</feature>
<feature type="sequence conflict" description="In Ref. 1; DQ067442." evidence="5" ref="1">
    <original>K</original>
    <variation>Q</variation>
    <location>
        <position position="73"/>
    </location>
</feature>
<feature type="sequence conflict" description="In Ref. 1; DQ067442." evidence="5" ref="1">
    <original>R</original>
    <variation>K</variation>
    <location>
        <position position="168"/>
    </location>
</feature>
<feature type="sequence conflict" description="In Ref. 1; DQ067442." evidence="5" ref="1">
    <original>Q</original>
    <variation>P</variation>
    <location>
        <position position="180"/>
    </location>
</feature>
<feature type="sequence conflict" description="In Ref. 1; DQ067442." evidence="5" ref="1">
    <original>K</original>
    <variation>R</variation>
    <location>
        <position position="206"/>
    </location>
</feature>
<feature type="sequence conflict" description="In Ref. 1; DQ067442." evidence="5" ref="1">
    <original>EQ</original>
    <variation>DK</variation>
    <location>
        <begin position="209"/>
        <end position="210"/>
    </location>
</feature>
<feature type="sequence conflict" description="In Ref. 1; DQ067442." evidence="5" ref="1">
    <original>R</original>
    <variation>G</variation>
    <location>
        <position position="221"/>
    </location>
</feature>